<feature type="chain" id="PRO_0000231128" description="3-dehydroquinate synthase">
    <location>
        <begin position="1"/>
        <end position="370"/>
    </location>
</feature>
<feature type="binding site" evidence="1">
    <location>
        <begin position="107"/>
        <end position="111"/>
    </location>
    <ligand>
        <name>NAD(+)</name>
        <dbReference type="ChEBI" id="CHEBI:57540"/>
    </ligand>
</feature>
<feature type="binding site" evidence="1">
    <location>
        <begin position="131"/>
        <end position="132"/>
    </location>
    <ligand>
        <name>NAD(+)</name>
        <dbReference type="ChEBI" id="CHEBI:57540"/>
    </ligand>
</feature>
<feature type="binding site" evidence="1">
    <location>
        <position position="144"/>
    </location>
    <ligand>
        <name>NAD(+)</name>
        <dbReference type="ChEBI" id="CHEBI:57540"/>
    </ligand>
</feature>
<feature type="binding site" evidence="1">
    <location>
        <position position="153"/>
    </location>
    <ligand>
        <name>NAD(+)</name>
        <dbReference type="ChEBI" id="CHEBI:57540"/>
    </ligand>
</feature>
<feature type="binding site" evidence="1">
    <location>
        <position position="186"/>
    </location>
    <ligand>
        <name>Zn(2+)</name>
        <dbReference type="ChEBI" id="CHEBI:29105"/>
    </ligand>
</feature>
<feature type="binding site" evidence="1">
    <location>
        <position position="249"/>
    </location>
    <ligand>
        <name>Zn(2+)</name>
        <dbReference type="ChEBI" id="CHEBI:29105"/>
    </ligand>
</feature>
<feature type="binding site" evidence="1">
    <location>
        <position position="267"/>
    </location>
    <ligand>
        <name>Zn(2+)</name>
        <dbReference type="ChEBI" id="CHEBI:29105"/>
    </ligand>
</feature>
<sequence>MMKTVHVALGARSYDVEIGPGLIAEAGARIAPLLARKRVAVLTDETVAALHLEALREGLAAGGVTMEALALPPGESTKGWPQFERAADWLLDQKVERRDVVVAFGGGVIGDLAGFAAAVLRRGVRFVQIPTSLLAQVDSSVGGKTGINASHGKNLIGAFHQPSLVLADTAVLGTLTARDFLAGYGEVVKYGLLGDAAFFDWLEGQGPALAAGDMAARVEAVTRSVQMKADIVARDETEQGDRALLNLGHTFCHALEAATGYSDRLLHGEGVAIGCALAFELSARLGLCSQEDPSRVRAHLKAMGMKTDLTDIPGDLPTADVLVDLMAQDKKVVDGQLRFILARGIGQAFVTSDVPREAVLTVLEDALASC</sequence>
<accession>Q5LSX9</accession>
<reference key="1">
    <citation type="journal article" date="2004" name="Nature">
        <title>Genome sequence of Silicibacter pomeroyi reveals adaptations to the marine environment.</title>
        <authorList>
            <person name="Moran M.A."/>
            <person name="Buchan A."/>
            <person name="Gonzalez J.M."/>
            <person name="Heidelberg J.F."/>
            <person name="Whitman W.B."/>
            <person name="Kiene R.P."/>
            <person name="Henriksen J.R."/>
            <person name="King G.M."/>
            <person name="Belas R."/>
            <person name="Fuqua C."/>
            <person name="Brinkac L.M."/>
            <person name="Lewis M."/>
            <person name="Johri S."/>
            <person name="Weaver B."/>
            <person name="Pai G."/>
            <person name="Eisen J.A."/>
            <person name="Rahe E."/>
            <person name="Sheldon W.M."/>
            <person name="Ye W."/>
            <person name="Miller T.R."/>
            <person name="Carlton J."/>
            <person name="Rasko D.A."/>
            <person name="Paulsen I.T."/>
            <person name="Ren Q."/>
            <person name="Daugherty S.C."/>
            <person name="DeBoy R.T."/>
            <person name="Dodson R.J."/>
            <person name="Durkin A.S."/>
            <person name="Madupu R."/>
            <person name="Nelson W.C."/>
            <person name="Sullivan S.A."/>
            <person name="Rosovitz M.J."/>
            <person name="Haft D.H."/>
            <person name="Selengut J."/>
            <person name="Ward N."/>
        </authorList>
    </citation>
    <scope>NUCLEOTIDE SEQUENCE [LARGE SCALE GENOMIC DNA]</scope>
    <source>
        <strain>ATCC 700808 / DSM 15171 / DSS-3</strain>
    </source>
</reference>
<reference key="2">
    <citation type="journal article" date="2014" name="Stand. Genomic Sci.">
        <title>An updated genome annotation for the model marine bacterium Ruegeria pomeroyi DSS-3.</title>
        <authorList>
            <person name="Rivers A.R."/>
            <person name="Smith C.B."/>
            <person name="Moran M.A."/>
        </authorList>
    </citation>
    <scope>GENOME REANNOTATION</scope>
    <source>
        <strain>ATCC 700808 / DSM 15171 / DSS-3</strain>
    </source>
</reference>
<evidence type="ECO:0000255" key="1">
    <source>
        <dbReference type="HAMAP-Rule" id="MF_00110"/>
    </source>
</evidence>
<protein>
    <recommendedName>
        <fullName evidence="1">3-dehydroquinate synthase</fullName>
        <shortName evidence="1">DHQS</shortName>
        <ecNumber evidence="1">4.2.3.4</ecNumber>
    </recommendedName>
</protein>
<gene>
    <name evidence="1" type="primary">aroB</name>
    <name type="ordered locus">SPO1635</name>
</gene>
<name>AROB_RUEPO</name>
<proteinExistence type="inferred from homology"/>
<organism>
    <name type="scientific">Ruegeria pomeroyi (strain ATCC 700808 / DSM 15171 / DSS-3)</name>
    <name type="common">Silicibacter pomeroyi</name>
    <dbReference type="NCBI Taxonomy" id="246200"/>
    <lineage>
        <taxon>Bacteria</taxon>
        <taxon>Pseudomonadati</taxon>
        <taxon>Pseudomonadota</taxon>
        <taxon>Alphaproteobacteria</taxon>
        <taxon>Rhodobacterales</taxon>
        <taxon>Roseobacteraceae</taxon>
        <taxon>Ruegeria</taxon>
    </lineage>
</organism>
<keyword id="KW-0028">Amino-acid biosynthesis</keyword>
<keyword id="KW-0057">Aromatic amino acid biosynthesis</keyword>
<keyword id="KW-0170">Cobalt</keyword>
<keyword id="KW-0963">Cytoplasm</keyword>
<keyword id="KW-0456">Lyase</keyword>
<keyword id="KW-0479">Metal-binding</keyword>
<keyword id="KW-0520">NAD</keyword>
<keyword id="KW-0547">Nucleotide-binding</keyword>
<keyword id="KW-1185">Reference proteome</keyword>
<keyword id="KW-0862">Zinc</keyword>
<dbReference type="EC" id="4.2.3.4" evidence="1"/>
<dbReference type="EMBL" id="CP000031">
    <property type="protein sequence ID" value="AAV94922.1"/>
    <property type="molecule type" value="Genomic_DNA"/>
</dbReference>
<dbReference type="RefSeq" id="WP_011047372.1">
    <property type="nucleotide sequence ID" value="NC_003911.12"/>
</dbReference>
<dbReference type="SMR" id="Q5LSX9"/>
<dbReference type="STRING" id="246200.SPO1635"/>
<dbReference type="PaxDb" id="246200-SPO1635"/>
<dbReference type="KEGG" id="sil:SPO1635"/>
<dbReference type="eggNOG" id="COG0337">
    <property type="taxonomic scope" value="Bacteria"/>
</dbReference>
<dbReference type="HOGENOM" id="CLU_001201_0_2_5"/>
<dbReference type="OrthoDB" id="9806583at2"/>
<dbReference type="UniPathway" id="UPA00053">
    <property type="reaction ID" value="UER00085"/>
</dbReference>
<dbReference type="Proteomes" id="UP000001023">
    <property type="component" value="Chromosome"/>
</dbReference>
<dbReference type="GO" id="GO:0005737">
    <property type="term" value="C:cytoplasm"/>
    <property type="evidence" value="ECO:0007669"/>
    <property type="project" value="UniProtKB-SubCell"/>
</dbReference>
<dbReference type="GO" id="GO:0003856">
    <property type="term" value="F:3-dehydroquinate synthase activity"/>
    <property type="evidence" value="ECO:0007669"/>
    <property type="project" value="UniProtKB-UniRule"/>
</dbReference>
<dbReference type="GO" id="GO:0046872">
    <property type="term" value="F:metal ion binding"/>
    <property type="evidence" value="ECO:0007669"/>
    <property type="project" value="UniProtKB-KW"/>
</dbReference>
<dbReference type="GO" id="GO:0000166">
    <property type="term" value="F:nucleotide binding"/>
    <property type="evidence" value="ECO:0007669"/>
    <property type="project" value="UniProtKB-KW"/>
</dbReference>
<dbReference type="GO" id="GO:0008652">
    <property type="term" value="P:amino acid biosynthetic process"/>
    <property type="evidence" value="ECO:0007669"/>
    <property type="project" value="UniProtKB-KW"/>
</dbReference>
<dbReference type="GO" id="GO:0009073">
    <property type="term" value="P:aromatic amino acid family biosynthetic process"/>
    <property type="evidence" value="ECO:0007669"/>
    <property type="project" value="UniProtKB-KW"/>
</dbReference>
<dbReference type="GO" id="GO:0009423">
    <property type="term" value="P:chorismate biosynthetic process"/>
    <property type="evidence" value="ECO:0007669"/>
    <property type="project" value="UniProtKB-UniRule"/>
</dbReference>
<dbReference type="CDD" id="cd08195">
    <property type="entry name" value="DHQS"/>
    <property type="match status" value="1"/>
</dbReference>
<dbReference type="FunFam" id="3.40.50.1970:FF:000001">
    <property type="entry name" value="3-dehydroquinate synthase"/>
    <property type="match status" value="1"/>
</dbReference>
<dbReference type="Gene3D" id="3.40.50.1970">
    <property type="match status" value="1"/>
</dbReference>
<dbReference type="Gene3D" id="1.20.1090.10">
    <property type="entry name" value="Dehydroquinate synthase-like - alpha domain"/>
    <property type="match status" value="1"/>
</dbReference>
<dbReference type="HAMAP" id="MF_00110">
    <property type="entry name" value="DHQ_synthase"/>
    <property type="match status" value="1"/>
</dbReference>
<dbReference type="InterPro" id="IPR050071">
    <property type="entry name" value="Dehydroquinate_synthase"/>
</dbReference>
<dbReference type="InterPro" id="IPR016037">
    <property type="entry name" value="DHQ_synth_AroB"/>
</dbReference>
<dbReference type="InterPro" id="IPR030963">
    <property type="entry name" value="DHQ_synth_fam"/>
</dbReference>
<dbReference type="InterPro" id="IPR030960">
    <property type="entry name" value="DHQS/DOIS_N"/>
</dbReference>
<dbReference type="InterPro" id="IPR056179">
    <property type="entry name" value="DHQS_C"/>
</dbReference>
<dbReference type="NCBIfam" id="TIGR01357">
    <property type="entry name" value="aroB"/>
    <property type="match status" value="1"/>
</dbReference>
<dbReference type="PANTHER" id="PTHR43622">
    <property type="entry name" value="3-DEHYDROQUINATE SYNTHASE"/>
    <property type="match status" value="1"/>
</dbReference>
<dbReference type="PANTHER" id="PTHR43622:SF7">
    <property type="entry name" value="3-DEHYDROQUINATE SYNTHASE, CHLOROPLASTIC"/>
    <property type="match status" value="1"/>
</dbReference>
<dbReference type="Pfam" id="PF01761">
    <property type="entry name" value="DHQ_synthase"/>
    <property type="match status" value="1"/>
</dbReference>
<dbReference type="Pfam" id="PF24621">
    <property type="entry name" value="DHQS_C"/>
    <property type="match status" value="1"/>
</dbReference>
<dbReference type="PIRSF" id="PIRSF001455">
    <property type="entry name" value="DHQ_synth"/>
    <property type="match status" value="1"/>
</dbReference>
<dbReference type="SUPFAM" id="SSF56796">
    <property type="entry name" value="Dehydroquinate synthase-like"/>
    <property type="match status" value="1"/>
</dbReference>
<comment type="function">
    <text evidence="1">Catalyzes the conversion of 3-deoxy-D-arabino-heptulosonate 7-phosphate (DAHP) to dehydroquinate (DHQ).</text>
</comment>
<comment type="catalytic activity">
    <reaction evidence="1">
        <text>7-phospho-2-dehydro-3-deoxy-D-arabino-heptonate = 3-dehydroquinate + phosphate</text>
        <dbReference type="Rhea" id="RHEA:21968"/>
        <dbReference type="ChEBI" id="CHEBI:32364"/>
        <dbReference type="ChEBI" id="CHEBI:43474"/>
        <dbReference type="ChEBI" id="CHEBI:58394"/>
        <dbReference type="EC" id="4.2.3.4"/>
    </reaction>
</comment>
<comment type="cofactor">
    <cofactor evidence="1">
        <name>Co(2+)</name>
        <dbReference type="ChEBI" id="CHEBI:48828"/>
    </cofactor>
    <cofactor evidence="1">
        <name>Zn(2+)</name>
        <dbReference type="ChEBI" id="CHEBI:29105"/>
    </cofactor>
    <text evidence="1">Binds 1 divalent metal cation per subunit. Can use either Co(2+) or Zn(2+).</text>
</comment>
<comment type="cofactor">
    <cofactor evidence="1">
        <name>NAD(+)</name>
        <dbReference type="ChEBI" id="CHEBI:57540"/>
    </cofactor>
</comment>
<comment type="pathway">
    <text evidence="1">Metabolic intermediate biosynthesis; chorismate biosynthesis; chorismate from D-erythrose 4-phosphate and phosphoenolpyruvate: step 2/7.</text>
</comment>
<comment type="subcellular location">
    <subcellularLocation>
        <location evidence="1">Cytoplasm</location>
    </subcellularLocation>
</comment>
<comment type="similarity">
    <text evidence="1">Belongs to the sugar phosphate cyclases superfamily. Dehydroquinate synthase family.</text>
</comment>